<protein>
    <recommendedName>
        <fullName evidence="14">Hyaluronidase-5</fullName>
        <shortName evidence="14">Hyal-5</shortName>
        <ecNumber evidence="4 5 6 7">3.2.1.35</ecNumber>
    </recommendedName>
    <alternativeName>
        <fullName evidence="8 14">Hyaluronoglucosaminidase-5</fullName>
    </alternativeName>
</protein>
<organism evidence="12">
    <name type="scientific">Mus musculus</name>
    <name type="common">Mouse</name>
    <dbReference type="NCBI Taxonomy" id="10090"/>
    <lineage>
        <taxon>Eukaryota</taxon>
        <taxon>Metazoa</taxon>
        <taxon>Chordata</taxon>
        <taxon>Craniata</taxon>
        <taxon>Vertebrata</taxon>
        <taxon>Euteleostomi</taxon>
        <taxon>Mammalia</taxon>
        <taxon>Eutheria</taxon>
        <taxon>Euarchontoglires</taxon>
        <taxon>Glires</taxon>
        <taxon>Rodentia</taxon>
        <taxon>Myomorpha</taxon>
        <taxon>Muroidea</taxon>
        <taxon>Muridae</taxon>
        <taxon>Murinae</taxon>
        <taxon>Mus</taxon>
        <taxon>Mus</taxon>
    </lineage>
</organism>
<accession>Q812F3</accession>
<feature type="signal peptide" evidence="3">
    <location>
        <begin position="1"/>
        <end position="35"/>
    </location>
</feature>
<feature type="chain" id="PRO_0000441636" description="Hyaluronidase-5" evidence="3">
    <location>
        <begin position="36"/>
        <end position="526"/>
    </location>
</feature>
<feature type="active site" description="Proton donor" evidence="1">
    <location>
        <position position="147"/>
    </location>
</feature>
<feature type="glycosylation site" description="N-linked (GlcNAc...) asparagine" evidence="3">
    <location>
        <position position="165"/>
    </location>
</feature>
<feature type="glycosylation site" description="N-linked (GlcNAc...) asparagine" evidence="3">
    <location>
        <position position="179"/>
    </location>
</feature>
<feature type="disulfide bond" evidence="2">
    <location>
        <begin position="60"/>
        <end position="351"/>
    </location>
</feature>
<feature type="disulfide bond" evidence="2">
    <location>
        <begin position="223"/>
        <end position="237"/>
    </location>
</feature>
<feature type="disulfide bond" evidence="2">
    <location>
        <begin position="376"/>
        <end position="387"/>
    </location>
</feature>
<feature type="disulfide bond" evidence="2">
    <location>
        <begin position="381"/>
        <end position="435"/>
    </location>
</feature>
<feature type="disulfide bond" evidence="2">
    <location>
        <begin position="437"/>
        <end position="443"/>
    </location>
</feature>
<keyword id="KW-1003">Cell membrane</keyword>
<keyword id="KW-0968">Cytoplasmic vesicle</keyword>
<keyword id="KW-1015">Disulfide bond</keyword>
<keyword id="KW-0325">Glycoprotein</keyword>
<keyword id="KW-0326">Glycosidase</keyword>
<keyword id="KW-0336">GPI-anchor</keyword>
<keyword id="KW-0378">Hydrolase</keyword>
<keyword id="KW-0449">Lipoprotein</keyword>
<keyword id="KW-0472">Membrane</keyword>
<keyword id="KW-1185">Reference proteome</keyword>
<keyword id="KW-0964">Secreted</keyword>
<keyword id="KW-0732">Signal</keyword>
<reference evidence="11" key="1">
    <citation type="journal article" date="2005" name="Proc. Natl. Acad. Sci. U.S.A.">
        <title>Identification of a hyaluronidase, Hyal5, involved in penetration of mouse sperm through cumulus mass.</title>
        <authorList>
            <person name="Kim E."/>
            <person name="Baba D."/>
            <person name="Kimura M."/>
            <person name="Yamashita M."/>
            <person name="Kashiwabara S."/>
            <person name="Baba T."/>
        </authorList>
    </citation>
    <scope>NUCLEOTIDE SEQUENCE [GENOMIC DNA]</scope>
    <scope>FUNCTION</scope>
    <scope>CATALYTIC ACTIVITY</scope>
    <scope>BIOPHYSICOCHEMICAL PROPERTIES</scope>
    <scope>SUBCELLULAR LOCATION</scope>
    <scope>TISSUE SPECIFICITY</scope>
    <scope>DEVELOPMENTAL STAGE</scope>
    <scope>IDENTIFICATION BY MASS SPECTROMETRY</scope>
    <source>
        <strain evidence="11">129/SvJ</strain>
        <tissue evidence="11">Testis</tissue>
    </source>
</reference>
<reference evidence="12" key="2">
    <citation type="journal article" date="2005" name="Science">
        <title>The transcriptional landscape of the mammalian genome.</title>
        <authorList>
            <person name="Carninci P."/>
            <person name="Kasukawa T."/>
            <person name="Katayama S."/>
            <person name="Gough J."/>
            <person name="Frith M.C."/>
            <person name="Maeda N."/>
            <person name="Oyama R."/>
            <person name="Ravasi T."/>
            <person name="Lenhard B."/>
            <person name="Wells C."/>
            <person name="Kodzius R."/>
            <person name="Shimokawa K."/>
            <person name="Bajic V.B."/>
            <person name="Brenner S.E."/>
            <person name="Batalov S."/>
            <person name="Forrest A.R."/>
            <person name="Zavolan M."/>
            <person name="Davis M.J."/>
            <person name="Wilming L.G."/>
            <person name="Aidinis V."/>
            <person name="Allen J.E."/>
            <person name="Ambesi-Impiombato A."/>
            <person name="Apweiler R."/>
            <person name="Aturaliya R.N."/>
            <person name="Bailey T.L."/>
            <person name="Bansal M."/>
            <person name="Baxter L."/>
            <person name="Beisel K.W."/>
            <person name="Bersano T."/>
            <person name="Bono H."/>
            <person name="Chalk A.M."/>
            <person name="Chiu K.P."/>
            <person name="Choudhary V."/>
            <person name="Christoffels A."/>
            <person name="Clutterbuck D.R."/>
            <person name="Crowe M.L."/>
            <person name="Dalla E."/>
            <person name="Dalrymple B.P."/>
            <person name="de Bono B."/>
            <person name="Della Gatta G."/>
            <person name="di Bernardo D."/>
            <person name="Down T."/>
            <person name="Engstrom P."/>
            <person name="Fagiolini M."/>
            <person name="Faulkner G."/>
            <person name="Fletcher C.F."/>
            <person name="Fukushima T."/>
            <person name="Furuno M."/>
            <person name="Futaki S."/>
            <person name="Gariboldi M."/>
            <person name="Georgii-Hemming P."/>
            <person name="Gingeras T.R."/>
            <person name="Gojobori T."/>
            <person name="Green R.E."/>
            <person name="Gustincich S."/>
            <person name="Harbers M."/>
            <person name="Hayashi Y."/>
            <person name="Hensch T.K."/>
            <person name="Hirokawa N."/>
            <person name="Hill D."/>
            <person name="Huminiecki L."/>
            <person name="Iacono M."/>
            <person name="Ikeo K."/>
            <person name="Iwama A."/>
            <person name="Ishikawa T."/>
            <person name="Jakt M."/>
            <person name="Kanapin A."/>
            <person name="Katoh M."/>
            <person name="Kawasawa Y."/>
            <person name="Kelso J."/>
            <person name="Kitamura H."/>
            <person name="Kitano H."/>
            <person name="Kollias G."/>
            <person name="Krishnan S.P."/>
            <person name="Kruger A."/>
            <person name="Kummerfeld S.K."/>
            <person name="Kurochkin I.V."/>
            <person name="Lareau L.F."/>
            <person name="Lazarevic D."/>
            <person name="Lipovich L."/>
            <person name="Liu J."/>
            <person name="Liuni S."/>
            <person name="McWilliam S."/>
            <person name="Madan Babu M."/>
            <person name="Madera M."/>
            <person name="Marchionni L."/>
            <person name="Matsuda H."/>
            <person name="Matsuzawa S."/>
            <person name="Miki H."/>
            <person name="Mignone F."/>
            <person name="Miyake S."/>
            <person name="Morris K."/>
            <person name="Mottagui-Tabar S."/>
            <person name="Mulder N."/>
            <person name="Nakano N."/>
            <person name="Nakauchi H."/>
            <person name="Ng P."/>
            <person name="Nilsson R."/>
            <person name="Nishiguchi S."/>
            <person name="Nishikawa S."/>
            <person name="Nori F."/>
            <person name="Ohara O."/>
            <person name="Okazaki Y."/>
            <person name="Orlando V."/>
            <person name="Pang K.C."/>
            <person name="Pavan W.J."/>
            <person name="Pavesi G."/>
            <person name="Pesole G."/>
            <person name="Petrovsky N."/>
            <person name="Piazza S."/>
            <person name="Reed J."/>
            <person name="Reid J.F."/>
            <person name="Ring B.Z."/>
            <person name="Ringwald M."/>
            <person name="Rost B."/>
            <person name="Ruan Y."/>
            <person name="Salzberg S.L."/>
            <person name="Sandelin A."/>
            <person name="Schneider C."/>
            <person name="Schoenbach C."/>
            <person name="Sekiguchi K."/>
            <person name="Semple C.A."/>
            <person name="Seno S."/>
            <person name="Sessa L."/>
            <person name="Sheng Y."/>
            <person name="Shibata Y."/>
            <person name="Shimada H."/>
            <person name="Shimada K."/>
            <person name="Silva D."/>
            <person name="Sinclair B."/>
            <person name="Sperling S."/>
            <person name="Stupka E."/>
            <person name="Sugiura K."/>
            <person name="Sultana R."/>
            <person name="Takenaka Y."/>
            <person name="Taki K."/>
            <person name="Tammoja K."/>
            <person name="Tan S.L."/>
            <person name="Tang S."/>
            <person name="Taylor M.S."/>
            <person name="Tegner J."/>
            <person name="Teichmann S.A."/>
            <person name="Ueda H.R."/>
            <person name="van Nimwegen E."/>
            <person name="Verardo R."/>
            <person name="Wei C.L."/>
            <person name="Yagi K."/>
            <person name="Yamanishi H."/>
            <person name="Zabarovsky E."/>
            <person name="Zhu S."/>
            <person name="Zimmer A."/>
            <person name="Hide W."/>
            <person name="Bult C."/>
            <person name="Grimmond S.M."/>
            <person name="Teasdale R.D."/>
            <person name="Liu E.T."/>
            <person name="Brusic V."/>
            <person name="Quackenbush J."/>
            <person name="Wahlestedt C."/>
            <person name="Mattick J.S."/>
            <person name="Hume D.A."/>
            <person name="Kai C."/>
            <person name="Sasaki D."/>
            <person name="Tomaru Y."/>
            <person name="Fukuda S."/>
            <person name="Kanamori-Katayama M."/>
            <person name="Suzuki M."/>
            <person name="Aoki J."/>
            <person name="Arakawa T."/>
            <person name="Iida J."/>
            <person name="Imamura K."/>
            <person name="Itoh M."/>
            <person name="Kato T."/>
            <person name="Kawaji H."/>
            <person name="Kawagashira N."/>
            <person name="Kawashima T."/>
            <person name="Kojima M."/>
            <person name="Kondo S."/>
            <person name="Konno H."/>
            <person name="Nakano K."/>
            <person name="Ninomiya N."/>
            <person name="Nishio T."/>
            <person name="Okada M."/>
            <person name="Plessy C."/>
            <person name="Shibata K."/>
            <person name="Shiraki T."/>
            <person name="Suzuki S."/>
            <person name="Tagami M."/>
            <person name="Waki K."/>
            <person name="Watahiki A."/>
            <person name="Okamura-Oho Y."/>
            <person name="Suzuki H."/>
            <person name="Kawai J."/>
            <person name="Hayashizaki Y."/>
        </authorList>
    </citation>
    <scope>NUCLEOTIDE SEQUENCE [LARGE SCALE MRNA]</scope>
    <source>
        <strain evidence="12">C57BL/6J</strain>
        <tissue evidence="12">Testis</tissue>
    </source>
</reference>
<reference evidence="15" key="3">
    <citation type="journal article" date="2009" name="PLoS Biol.">
        <title>Lineage-specific biology revealed by a finished genome assembly of the mouse.</title>
        <authorList>
            <person name="Church D.M."/>
            <person name="Goodstadt L."/>
            <person name="Hillier L.W."/>
            <person name="Zody M.C."/>
            <person name="Goldstein S."/>
            <person name="She X."/>
            <person name="Bult C.J."/>
            <person name="Agarwala R."/>
            <person name="Cherry J.L."/>
            <person name="DiCuccio M."/>
            <person name="Hlavina W."/>
            <person name="Kapustin Y."/>
            <person name="Meric P."/>
            <person name="Maglott D."/>
            <person name="Birtle Z."/>
            <person name="Marques A.C."/>
            <person name="Graves T."/>
            <person name="Zhou S."/>
            <person name="Teague B."/>
            <person name="Potamousis K."/>
            <person name="Churas C."/>
            <person name="Place M."/>
            <person name="Herschleb J."/>
            <person name="Runnheim R."/>
            <person name="Forrest D."/>
            <person name="Amos-Landgraf J."/>
            <person name="Schwartz D.C."/>
            <person name="Cheng Z."/>
            <person name="Lindblad-Toh K."/>
            <person name="Eichler E.E."/>
            <person name="Ponting C.P."/>
        </authorList>
    </citation>
    <scope>NUCLEOTIDE SEQUENCE [LARGE SCALE GENOMIC DNA]</scope>
    <source>
        <strain evidence="15">C57BL/6J</strain>
    </source>
</reference>
<reference evidence="13" key="4">
    <citation type="submission" date="2005-09" db="EMBL/GenBank/DDBJ databases">
        <authorList>
            <person name="Mural R.J."/>
            <person name="Adams M.D."/>
            <person name="Myers E.W."/>
            <person name="Smith H.O."/>
            <person name="Venter J.C."/>
        </authorList>
    </citation>
    <scope>NUCLEOTIDE SEQUENCE [LARGE SCALE GENOMIC DNA]</scope>
</reference>
<reference evidence="10" key="5">
    <citation type="journal article" date="2004" name="Genome Res.">
        <title>The status, quality, and expansion of the NIH full-length cDNA project: the Mammalian Gene Collection (MGC).</title>
        <authorList>
            <consortium name="The MGC Project Team"/>
        </authorList>
    </citation>
    <scope>NUCLEOTIDE SEQUENCE [LARGE SCALE MRNA]</scope>
    <source>
        <tissue>Brain</tissue>
    </source>
</reference>
<reference evidence="9" key="6">
    <citation type="journal article" date="2007" name="Biochem. J.">
        <title>Mouse testicular hyaluronidase-like proteins SPAM1 and HYAL5 but not HYALP1 degrade hyaluronan.</title>
        <authorList>
            <person name="Reitinger S."/>
            <person name="Laschober G.T."/>
            <person name="Fehrer C."/>
            <person name="Greiderer B."/>
            <person name="Lepperdinger G."/>
        </authorList>
    </citation>
    <scope>FUNCTION</scope>
    <scope>CATALYTIC ACTIVITY</scope>
    <scope>BIOPHYSICOCHEMICAL PROPERTIES</scope>
    <scope>SUBCELLULAR LOCATION</scope>
    <scope>TISSUE SPECIFICITY</scope>
</reference>
<reference evidence="9" key="7">
    <citation type="journal article" date="2009" name="Biol. Reprod.">
        <title>Functional roles of mouse sperm hyaluronidases, HYAL5 and SPAM1, in fertilization.</title>
        <authorList>
            <person name="Kimura M."/>
            <person name="Kim E."/>
            <person name="Kang W."/>
            <person name="Yamashita M."/>
            <person name="Saigo M."/>
            <person name="Yamazaki T."/>
            <person name="Nakanishi T."/>
            <person name="Kashiwabara S."/>
            <person name="Baba T."/>
        </authorList>
    </citation>
    <scope>FUNCTION</scope>
    <scope>CATALYTIC ACTIVITY</scope>
    <scope>TISSUE SPECIFICITY</scope>
    <scope>DISRUPTION PHENOTYPE</scope>
</reference>
<evidence type="ECO:0000250" key="1">
    <source>
        <dbReference type="UniProtKB" id="Q08169"/>
    </source>
</evidence>
<evidence type="ECO:0000250" key="2">
    <source>
        <dbReference type="UniProtKB" id="Q12794"/>
    </source>
</evidence>
<evidence type="ECO:0000255" key="3"/>
<evidence type="ECO:0000255" key="4">
    <source>
        <dbReference type="RuleBase" id="RU610713"/>
    </source>
</evidence>
<evidence type="ECO:0000269" key="5">
    <source>
    </source>
</evidence>
<evidence type="ECO:0000269" key="6">
    <source>
    </source>
</evidence>
<evidence type="ECO:0000269" key="7">
    <source>
    </source>
</evidence>
<evidence type="ECO:0000303" key="8">
    <source>
    </source>
</evidence>
<evidence type="ECO:0000305" key="9"/>
<evidence type="ECO:0000312" key="10">
    <source>
        <dbReference type="EMBL" id="AAI45993.1"/>
    </source>
</evidence>
<evidence type="ECO:0000312" key="11">
    <source>
        <dbReference type="EMBL" id="BAC55071.1"/>
    </source>
</evidence>
<evidence type="ECO:0000312" key="12">
    <source>
        <dbReference type="EMBL" id="BAE21628.1"/>
    </source>
</evidence>
<evidence type="ECO:0000312" key="13">
    <source>
        <dbReference type="EMBL" id="EDL13813.1"/>
    </source>
</evidence>
<evidence type="ECO:0000312" key="14">
    <source>
        <dbReference type="MGI" id="MGI:1921718"/>
    </source>
</evidence>
<evidence type="ECO:0000312" key="15">
    <source>
        <dbReference type="Proteomes" id="UP000000589"/>
    </source>
</evidence>
<sequence>MRVLYFKHSFFRSLLKSNGLPQTLLVFLLIPCYLTVDFRAPPLIPDVPFLWAWNAPTESCFTRFNQPLDLGLFSLVGSPRKSATGQPVTIFYSDRLGLYPYIDDSQLIFNGGLPQLVSLKSHLEVAKTDILHYMPIDNVGLAVIDWEEWRPTWARNWKPKDIYRNKSIELVQQQNILLNFTEAVKWAKEEFEEAARHFMEETLRLGKSLRPNHLWGFYLFPDCYNNKFQVADYKGECPDIEKHRNDALFWIWEESTALYPSIYLKSSLKSSPQAALYVRNRVQEAIRVSKVKDPRNPLPIFVYFRIVFTDLTYQYLYEDDLVNTIGETIALGTSGMVMWGTLSLSQTMKSCLDLHDYLKTILNPYIINVTLAAKMCSQTLCQNQGVCSRKDWNSNDYLHLNPQNFQIHFVKHGKYEIRGNPTLENLLYFSQKFRCSCFAHLNCQERADIESVSTVSVCTLEDICINSLVISDKSELPKDWNRPYFVNSNQSDITSSATVSPCVPRKDVSGYLVVLSLYSQHLKYSL</sequence>
<proteinExistence type="evidence at protein level"/>
<comment type="function">
    <text evidence="5 6 7">Catalyzes the hydrolysis of hyaluronan into smaller oligosaccharide fragments (PubMed:16330764, PubMed:16925524, PubMed:19605784). Does not appear to be essential for fertilization (PubMed:19605784).</text>
</comment>
<comment type="catalytic activity">
    <reaction evidence="4 5 6 7">
        <text>Random hydrolysis of (1-&gt;4)-linkages between N-acetyl-beta-D-glucosamine and D-glucuronate residues in hyaluronate.</text>
        <dbReference type="EC" id="3.2.1.35"/>
    </reaction>
</comment>
<comment type="biophysicochemical properties">
    <phDependence>
        <text evidence="5 6">Optimum pH is 5-7.</text>
    </phDependence>
</comment>
<comment type="subcellular location">
    <subcellularLocation>
        <location evidence="5 6">Cell membrane</location>
        <topology evidence="5 6">Lipid-anchor</topology>
        <topology evidence="5 6">GPI-anchor</topology>
    </subcellularLocation>
    <subcellularLocation>
        <location evidence="5">Cytoplasmic vesicle</location>
        <location evidence="5">Secretory vesicle</location>
        <location evidence="5">Acrosome membrane</location>
    </subcellularLocation>
    <subcellularLocation>
        <location evidence="5">Secreted</location>
    </subcellularLocation>
    <text evidence="5">Located on the plasma and acrosomal membranes of acrosome-intact (AI) sperm and released during the acrosome reaction.</text>
</comment>
<comment type="tissue specificity">
    <text evidence="5 6 7">Expressed in testis, epididymal sperm and epididymides (at protein level) (PubMed:16330764, PubMed:19605784). Expressed at highest levels in testis with lesser amounts in epididymal sperm (PubMed:16330764, PubMed:16925524, PubMed:19605784).</text>
</comment>
<comment type="developmental stage">
    <text evidence="5">Detected in the developing testis at postnatal day 20, with increasing levels through development.</text>
</comment>
<comment type="disruption phenotype">
    <text evidence="7">No visible phenotype. Viable and fertile.</text>
</comment>
<comment type="similarity">
    <text evidence="9">Belongs to the glycosyl hydrolase 56 family.</text>
</comment>
<dbReference type="EC" id="3.2.1.35" evidence="4 5 6 7"/>
<dbReference type="EMBL" id="AB085680">
    <property type="protein sequence ID" value="BAC55071.1"/>
    <property type="molecule type" value="Genomic_DNA"/>
</dbReference>
<dbReference type="EMBL" id="AK133387">
    <property type="protein sequence ID" value="BAE21628.1"/>
    <property type="molecule type" value="mRNA"/>
</dbReference>
<dbReference type="EMBL" id="AC127559">
    <property type="status" value="NOT_ANNOTATED_CDS"/>
    <property type="molecule type" value="Genomic_DNA"/>
</dbReference>
<dbReference type="EMBL" id="CH466533">
    <property type="protein sequence ID" value="EDL13813.1"/>
    <property type="molecule type" value="Genomic_DNA"/>
</dbReference>
<dbReference type="EMBL" id="BC145992">
    <property type="protein sequence ID" value="AAI45993.1"/>
    <property type="molecule type" value="mRNA"/>
</dbReference>
<dbReference type="EMBL" id="BC145994">
    <property type="protein sequence ID" value="AAI45995.1"/>
    <property type="molecule type" value="mRNA"/>
</dbReference>
<dbReference type="CCDS" id="CCDS19948.1"/>
<dbReference type="RefSeq" id="NP_001404776.1">
    <property type="nucleotide sequence ID" value="NM_001417847.1"/>
</dbReference>
<dbReference type="RefSeq" id="NP_083233.1">
    <property type="nucleotide sequence ID" value="NM_028957.3"/>
</dbReference>
<dbReference type="RefSeq" id="XP_006505250.1">
    <property type="nucleotide sequence ID" value="XM_006505187.1"/>
</dbReference>
<dbReference type="SMR" id="Q812F3"/>
<dbReference type="FunCoup" id="Q812F3">
    <property type="interactions" value="265"/>
</dbReference>
<dbReference type="STRING" id="10090.ENSMUSP00000144011"/>
<dbReference type="CAZy" id="GH56">
    <property type="family name" value="Glycoside Hydrolase Family 56"/>
</dbReference>
<dbReference type="GlyCosmos" id="Q812F3">
    <property type="glycosylation" value="2 sites, No reported glycans"/>
</dbReference>
<dbReference type="GlyGen" id="Q812F3">
    <property type="glycosylation" value="2 sites"/>
</dbReference>
<dbReference type="SwissPalm" id="Q812F3"/>
<dbReference type="PaxDb" id="10090-ENSMUSP00000031689"/>
<dbReference type="ProteomicsDB" id="267028"/>
<dbReference type="DNASU" id="74468"/>
<dbReference type="Ensembl" id="ENSMUST00000031689.6">
    <property type="protein sequence ID" value="ENSMUSP00000031689.6"/>
    <property type="gene ID" value="ENSMUSG00000029678.9"/>
</dbReference>
<dbReference type="Ensembl" id="ENSMUST00000200968.4">
    <property type="protein sequence ID" value="ENSMUSP00000144011.2"/>
    <property type="gene ID" value="ENSMUSG00000029678.9"/>
</dbReference>
<dbReference type="GeneID" id="74468"/>
<dbReference type="KEGG" id="mmu:74468"/>
<dbReference type="UCSC" id="uc009bcb.1">
    <property type="organism name" value="mouse"/>
</dbReference>
<dbReference type="AGR" id="MGI:1921718"/>
<dbReference type="CTD" id="74468"/>
<dbReference type="MGI" id="MGI:1921718">
    <property type="gene designation" value="Hyal5"/>
</dbReference>
<dbReference type="VEuPathDB" id="HostDB:ENSMUSG00000029678"/>
<dbReference type="eggNOG" id="ENOG502R6HD">
    <property type="taxonomic scope" value="Eukaryota"/>
</dbReference>
<dbReference type="GeneTree" id="ENSGT01020000230364"/>
<dbReference type="InParanoid" id="Q812F3"/>
<dbReference type="OMA" id="RAKIVFE"/>
<dbReference type="OrthoDB" id="5796153at2759"/>
<dbReference type="PhylomeDB" id="Q812F3"/>
<dbReference type="TreeFam" id="TF321598"/>
<dbReference type="Reactome" id="R-MMU-2534343">
    <property type="pathway name" value="Interaction With Cumulus Cells And The Zona Pellucida"/>
</dbReference>
<dbReference type="BioGRID-ORCS" id="74468">
    <property type="hits" value="4 hits in 79 CRISPR screens"/>
</dbReference>
<dbReference type="ChiTaRS" id="Hyal5">
    <property type="organism name" value="mouse"/>
</dbReference>
<dbReference type="PRO" id="PR:Q812F3"/>
<dbReference type="Proteomes" id="UP000000589">
    <property type="component" value="Chromosome 6"/>
</dbReference>
<dbReference type="RNAct" id="Q812F3">
    <property type="molecule type" value="protein"/>
</dbReference>
<dbReference type="Bgee" id="ENSMUSG00000029678">
    <property type="expression patterns" value="Expressed in spermatid and 14 other cell types or tissues"/>
</dbReference>
<dbReference type="GO" id="GO:0002080">
    <property type="term" value="C:acrosomal membrane"/>
    <property type="evidence" value="ECO:0007669"/>
    <property type="project" value="UniProtKB-SubCell"/>
</dbReference>
<dbReference type="GO" id="GO:0001669">
    <property type="term" value="C:acrosomal vesicle"/>
    <property type="evidence" value="ECO:0000314"/>
    <property type="project" value="MGI"/>
</dbReference>
<dbReference type="GO" id="GO:0009897">
    <property type="term" value="C:external side of plasma membrane"/>
    <property type="evidence" value="ECO:0000314"/>
    <property type="project" value="MGI"/>
</dbReference>
<dbReference type="GO" id="GO:0005576">
    <property type="term" value="C:extracellular region"/>
    <property type="evidence" value="ECO:0007669"/>
    <property type="project" value="UniProtKB-SubCell"/>
</dbReference>
<dbReference type="GO" id="GO:0005886">
    <property type="term" value="C:plasma membrane"/>
    <property type="evidence" value="ECO:0000314"/>
    <property type="project" value="MGI"/>
</dbReference>
<dbReference type="GO" id="GO:0004415">
    <property type="term" value="F:hyalurononglucosaminidase activity"/>
    <property type="evidence" value="ECO:0000314"/>
    <property type="project" value="MGI"/>
</dbReference>
<dbReference type="GO" id="GO:0005975">
    <property type="term" value="P:carbohydrate metabolic process"/>
    <property type="evidence" value="ECO:0007669"/>
    <property type="project" value="InterPro"/>
</dbReference>
<dbReference type="GO" id="GO:0007342">
    <property type="term" value="P:fusion of sperm to egg plasma membrane involved in single fertilization"/>
    <property type="evidence" value="ECO:0007669"/>
    <property type="project" value="InterPro"/>
</dbReference>
<dbReference type="GO" id="GO:0007341">
    <property type="term" value="P:penetration of zona pellucida"/>
    <property type="evidence" value="ECO:0000314"/>
    <property type="project" value="MGI"/>
</dbReference>
<dbReference type="FunFam" id="3.20.20.70:FF:000065">
    <property type="entry name" value="Hyaluronidase"/>
    <property type="match status" value="1"/>
</dbReference>
<dbReference type="Gene3D" id="3.20.20.70">
    <property type="entry name" value="Aldolase class I"/>
    <property type="match status" value="1"/>
</dbReference>
<dbReference type="InterPro" id="IPR013785">
    <property type="entry name" value="Aldolase_TIM"/>
</dbReference>
<dbReference type="InterPro" id="IPR017853">
    <property type="entry name" value="Glycoside_hydrolase_SF"/>
</dbReference>
<dbReference type="InterPro" id="IPR018155">
    <property type="entry name" value="Hyaluronidase"/>
</dbReference>
<dbReference type="InterPro" id="IPR001439">
    <property type="entry name" value="Hyaluronidase_PH20/Hyal5"/>
</dbReference>
<dbReference type="PANTHER" id="PTHR11769">
    <property type="entry name" value="HYALURONIDASE"/>
    <property type="match status" value="1"/>
</dbReference>
<dbReference type="PANTHER" id="PTHR11769:SF20">
    <property type="entry name" value="HYALURONIDASE PH-20"/>
    <property type="match status" value="1"/>
</dbReference>
<dbReference type="Pfam" id="PF01630">
    <property type="entry name" value="Glyco_hydro_56"/>
    <property type="match status" value="1"/>
</dbReference>
<dbReference type="PIRSF" id="PIRSF038193">
    <property type="entry name" value="Hyaluronidase"/>
    <property type="match status" value="1"/>
</dbReference>
<dbReference type="PIRSF" id="PIRSF500773">
    <property type="entry name" value="Hyaluronidase_PH20_Hyal5"/>
    <property type="match status" value="1"/>
</dbReference>
<dbReference type="PRINTS" id="PR00846">
    <property type="entry name" value="GLHYDRLASE56"/>
</dbReference>
<dbReference type="PRINTS" id="PR00848">
    <property type="entry name" value="SPERMPH20"/>
</dbReference>
<dbReference type="SUPFAM" id="SSF51445">
    <property type="entry name" value="(Trans)glycosidases"/>
    <property type="match status" value="1"/>
</dbReference>
<gene>
    <name evidence="14" type="primary">Hyal5</name>
</gene>
<name>HYAL5_MOUSE</name>